<evidence type="ECO:0000255" key="1">
    <source>
        <dbReference type="HAMAP-Rule" id="MF_00607"/>
    </source>
</evidence>
<gene>
    <name evidence="1" type="primary">rsmA</name>
    <name evidence="1" type="synonym">ksgA</name>
    <name type="ordered locus">Tbd_2340</name>
</gene>
<keyword id="KW-0963">Cytoplasm</keyword>
<keyword id="KW-0489">Methyltransferase</keyword>
<keyword id="KW-1185">Reference proteome</keyword>
<keyword id="KW-0694">RNA-binding</keyword>
<keyword id="KW-0698">rRNA processing</keyword>
<keyword id="KW-0949">S-adenosyl-L-methionine</keyword>
<keyword id="KW-0808">Transferase</keyword>
<organism>
    <name type="scientific">Thiobacillus denitrificans (strain ATCC 25259 / T1)</name>
    <dbReference type="NCBI Taxonomy" id="292415"/>
    <lineage>
        <taxon>Bacteria</taxon>
        <taxon>Pseudomonadati</taxon>
        <taxon>Pseudomonadota</taxon>
        <taxon>Betaproteobacteria</taxon>
        <taxon>Nitrosomonadales</taxon>
        <taxon>Thiobacillaceae</taxon>
        <taxon>Thiobacillus</taxon>
    </lineage>
</organism>
<accession>Q3SGF7</accession>
<protein>
    <recommendedName>
        <fullName evidence="1">Ribosomal RNA small subunit methyltransferase A</fullName>
        <ecNumber evidence="1">2.1.1.182</ecNumber>
    </recommendedName>
    <alternativeName>
        <fullName evidence="1">16S rRNA (adenine(1518)-N(6)/adenine(1519)-N(6))-dimethyltransferase</fullName>
    </alternativeName>
    <alternativeName>
        <fullName evidence="1">16S rRNA dimethyladenosine transferase</fullName>
    </alternativeName>
    <alternativeName>
        <fullName evidence="1">16S rRNA dimethylase</fullName>
    </alternativeName>
    <alternativeName>
        <fullName evidence="1">S-adenosylmethionine-6-N', N'-adenosyl(rRNA) dimethyltransferase</fullName>
    </alternativeName>
</protein>
<comment type="function">
    <text evidence="1">Specifically dimethylates two adjacent adenosines (A1518 and A1519) in the loop of a conserved hairpin near the 3'-end of 16S rRNA in the 30S particle. May play a critical role in biogenesis of 30S subunits.</text>
</comment>
<comment type="catalytic activity">
    <reaction evidence="1">
        <text>adenosine(1518)/adenosine(1519) in 16S rRNA + 4 S-adenosyl-L-methionine = N(6)-dimethyladenosine(1518)/N(6)-dimethyladenosine(1519) in 16S rRNA + 4 S-adenosyl-L-homocysteine + 4 H(+)</text>
        <dbReference type="Rhea" id="RHEA:19609"/>
        <dbReference type="Rhea" id="RHEA-COMP:10232"/>
        <dbReference type="Rhea" id="RHEA-COMP:10233"/>
        <dbReference type="ChEBI" id="CHEBI:15378"/>
        <dbReference type="ChEBI" id="CHEBI:57856"/>
        <dbReference type="ChEBI" id="CHEBI:59789"/>
        <dbReference type="ChEBI" id="CHEBI:74411"/>
        <dbReference type="ChEBI" id="CHEBI:74493"/>
        <dbReference type="EC" id="2.1.1.182"/>
    </reaction>
</comment>
<comment type="subcellular location">
    <subcellularLocation>
        <location evidence="1">Cytoplasm</location>
    </subcellularLocation>
</comment>
<comment type="similarity">
    <text evidence="1">Belongs to the class I-like SAM-binding methyltransferase superfamily. rRNA adenine N(6)-methyltransferase family. RsmA subfamily.</text>
</comment>
<sequence length="255" mass="28534">MHTPRKRFGQNFLIDDGIVHAIVNAIHPQAGETVVEIGPGLGALTRPLLERLPHLHAVELDRDIIARLRRAWPPERLTLHAGDALKFDFGSLGDDLRIVGNLPYNISTPLLFHLLEFAPRIRDMHFMLQKEVVERMVASPATADYGRLSIMLQRRFHMEWLLDVPPTAFDPPPKVESAVVRLIPKSTAEVPSVDEALFARVVAAAFAQRRKTLRNTLSALMRPEDFVALGIDPGLRAEALHVADYEAITAYLATR</sequence>
<dbReference type="EC" id="2.1.1.182" evidence="1"/>
<dbReference type="EMBL" id="CP000116">
    <property type="protein sequence ID" value="AAZ98293.1"/>
    <property type="molecule type" value="Genomic_DNA"/>
</dbReference>
<dbReference type="RefSeq" id="WP_011312852.1">
    <property type="nucleotide sequence ID" value="NC_007404.1"/>
</dbReference>
<dbReference type="SMR" id="Q3SGF7"/>
<dbReference type="STRING" id="292415.Tbd_2340"/>
<dbReference type="KEGG" id="tbd:Tbd_2340"/>
<dbReference type="eggNOG" id="COG0030">
    <property type="taxonomic scope" value="Bacteria"/>
</dbReference>
<dbReference type="HOGENOM" id="CLU_041220_0_1_4"/>
<dbReference type="OrthoDB" id="9814755at2"/>
<dbReference type="Proteomes" id="UP000008291">
    <property type="component" value="Chromosome"/>
</dbReference>
<dbReference type="GO" id="GO:0005829">
    <property type="term" value="C:cytosol"/>
    <property type="evidence" value="ECO:0007669"/>
    <property type="project" value="TreeGrafter"/>
</dbReference>
<dbReference type="GO" id="GO:0052908">
    <property type="term" value="F:16S rRNA (adenine(1518)-N(6)/adenine(1519)-N(6))-dimethyltransferase activity"/>
    <property type="evidence" value="ECO:0007669"/>
    <property type="project" value="UniProtKB-EC"/>
</dbReference>
<dbReference type="GO" id="GO:0003723">
    <property type="term" value="F:RNA binding"/>
    <property type="evidence" value="ECO:0007669"/>
    <property type="project" value="UniProtKB-KW"/>
</dbReference>
<dbReference type="CDD" id="cd02440">
    <property type="entry name" value="AdoMet_MTases"/>
    <property type="match status" value="1"/>
</dbReference>
<dbReference type="FunFam" id="1.10.8.100:FF:000001">
    <property type="entry name" value="Ribosomal RNA small subunit methyltransferase A"/>
    <property type="match status" value="1"/>
</dbReference>
<dbReference type="Gene3D" id="1.10.8.100">
    <property type="entry name" value="Ribosomal RNA adenine dimethylase-like, domain 2"/>
    <property type="match status" value="1"/>
</dbReference>
<dbReference type="Gene3D" id="3.40.50.150">
    <property type="entry name" value="Vaccinia Virus protein VP39"/>
    <property type="match status" value="1"/>
</dbReference>
<dbReference type="HAMAP" id="MF_00607">
    <property type="entry name" value="16SrRNA_methyltr_A"/>
    <property type="match status" value="1"/>
</dbReference>
<dbReference type="InterPro" id="IPR001737">
    <property type="entry name" value="KsgA/Erm"/>
</dbReference>
<dbReference type="InterPro" id="IPR023165">
    <property type="entry name" value="rRNA_Ade_diMease-like_C"/>
</dbReference>
<dbReference type="InterPro" id="IPR020596">
    <property type="entry name" value="rRNA_Ade_Mease_Trfase_CS"/>
</dbReference>
<dbReference type="InterPro" id="IPR020598">
    <property type="entry name" value="rRNA_Ade_methylase_Trfase_N"/>
</dbReference>
<dbReference type="InterPro" id="IPR011530">
    <property type="entry name" value="rRNA_adenine_dimethylase"/>
</dbReference>
<dbReference type="InterPro" id="IPR029063">
    <property type="entry name" value="SAM-dependent_MTases_sf"/>
</dbReference>
<dbReference type="NCBIfam" id="TIGR00755">
    <property type="entry name" value="ksgA"/>
    <property type="match status" value="1"/>
</dbReference>
<dbReference type="PANTHER" id="PTHR11727">
    <property type="entry name" value="DIMETHYLADENOSINE TRANSFERASE"/>
    <property type="match status" value="1"/>
</dbReference>
<dbReference type="PANTHER" id="PTHR11727:SF7">
    <property type="entry name" value="DIMETHYLADENOSINE TRANSFERASE-RELATED"/>
    <property type="match status" value="1"/>
</dbReference>
<dbReference type="Pfam" id="PF00398">
    <property type="entry name" value="RrnaAD"/>
    <property type="match status" value="1"/>
</dbReference>
<dbReference type="SMART" id="SM00650">
    <property type="entry name" value="rADc"/>
    <property type="match status" value="1"/>
</dbReference>
<dbReference type="SUPFAM" id="SSF53335">
    <property type="entry name" value="S-adenosyl-L-methionine-dependent methyltransferases"/>
    <property type="match status" value="1"/>
</dbReference>
<dbReference type="PROSITE" id="PS01131">
    <property type="entry name" value="RRNA_A_DIMETH"/>
    <property type="match status" value="1"/>
</dbReference>
<dbReference type="PROSITE" id="PS51689">
    <property type="entry name" value="SAM_RNA_A_N6_MT"/>
    <property type="match status" value="1"/>
</dbReference>
<reference key="1">
    <citation type="journal article" date="2006" name="J. Bacteriol.">
        <title>The genome sequence of the obligately chemolithoautotrophic, facultatively anaerobic bacterium Thiobacillus denitrificans.</title>
        <authorList>
            <person name="Beller H.R."/>
            <person name="Chain P.S."/>
            <person name="Letain T.E."/>
            <person name="Chakicherla A."/>
            <person name="Larimer F.W."/>
            <person name="Richardson P.M."/>
            <person name="Coleman M.A."/>
            <person name="Wood A.P."/>
            <person name="Kelly D.P."/>
        </authorList>
    </citation>
    <scope>NUCLEOTIDE SEQUENCE [LARGE SCALE GENOMIC DNA]</scope>
    <source>
        <strain>ATCC 25259 / T1</strain>
    </source>
</reference>
<proteinExistence type="inferred from homology"/>
<name>RSMA_THIDA</name>
<feature type="chain" id="PRO_0000257370" description="Ribosomal RNA small subunit methyltransferase A">
    <location>
        <begin position="1"/>
        <end position="255"/>
    </location>
</feature>
<feature type="binding site" evidence="1">
    <location>
        <position position="11"/>
    </location>
    <ligand>
        <name>S-adenosyl-L-methionine</name>
        <dbReference type="ChEBI" id="CHEBI:59789"/>
    </ligand>
</feature>
<feature type="binding site" evidence="1">
    <location>
        <position position="13"/>
    </location>
    <ligand>
        <name>S-adenosyl-L-methionine</name>
        <dbReference type="ChEBI" id="CHEBI:59789"/>
    </ligand>
</feature>
<feature type="binding site" evidence="1">
    <location>
        <position position="38"/>
    </location>
    <ligand>
        <name>S-adenosyl-L-methionine</name>
        <dbReference type="ChEBI" id="CHEBI:59789"/>
    </ligand>
</feature>
<feature type="binding site" evidence="1">
    <location>
        <position position="59"/>
    </location>
    <ligand>
        <name>S-adenosyl-L-methionine</name>
        <dbReference type="ChEBI" id="CHEBI:59789"/>
    </ligand>
</feature>
<feature type="binding site" evidence="1">
    <location>
        <position position="83"/>
    </location>
    <ligand>
        <name>S-adenosyl-L-methionine</name>
        <dbReference type="ChEBI" id="CHEBI:59789"/>
    </ligand>
</feature>
<feature type="binding site" evidence="1">
    <location>
        <position position="101"/>
    </location>
    <ligand>
        <name>S-adenosyl-L-methionine</name>
        <dbReference type="ChEBI" id="CHEBI:59789"/>
    </ligand>
</feature>